<feature type="chain" id="PRO_0000140817" description="3-dehydroquinate synthase">
    <location>
        <begin position="1"/>
        <end position="332"/>
    </location>
</feature>
<feature type="binding site" evidence="1">
    <location>
        <begin position="55"/>
        <end position="60"/>
    </location>
    <ligand>
        <name>NAD(+)</name>
        <dbReference type="ChEBI" id="CHEBI:57540"/>
    </ligand>
</feature>
<feature type="binding site" evidence="1">
    <location>
        <begin position="89"/>
        <end position="93"/>
    </location>
    <ligand>
        <name>NAD(+)</name>
        <dbReference type="ChEBI" id="CHEBI:57540"/>
    </ligand>
</feature>
<feature type="binding site" evidence="1">
    <location>
        <begin position="113"/>
        <end position="114"/>
    </location>
    <ligand>
        <name>NAD(+)</name>
        <dbReference type="ChEBI" id="CHEBI:57540"/>
    </ligand>
</feature>
<feature type="binding site" evidence="1">
    <location>
        <position position="126"/>
    </location>
    <ligand>
        <name>NAD(+)</name>
        <dbReference type="ChEBI" id="CHEBI:57540"/>
    </ligand>
</feature>
<feature type="binding site" evidence="1">
    <location>
        <position position="134"/>
    </location>
    <ligand>
        <name>NAD(+)</name>
        <dbReference type="ChEBI" id="CHEBI:57540"/>
    </ligand>
</feature>
<feature type="binding site" evidence="1">
    <location>
        <begin position="152"/>
        <end position="155"/>
    </location>
    <ligand>
        <name>NAD(+)</name>
        <dbReference type="ChEBI" id="CHEBI:57540"/>
    </ligand>
</feature>
<feature type="binding site" evidence="1">
    <location>
        <position position="167"/>
    </location>
    <ligand>
        <name>Zn(2+)</name>
        <dbReference type="ChEBI" id="CHEBI:29105"/>
    </ligand>
</feature>
<feature type="binding site" evidence="1">
    <location>
        <position position="226"/>
    </location>
    <ligand>
        <name>Zn(2+)</name>
        <dbReference type="ChEBI" id="CHEBI:29105"/>
    </ligand>
</feature>
<feature type="binding site" evidence="1">
    <location>
        <position position="242"/>
    </location>
    <ligand>
        <name>Zn(2+)</name>
        <dbReference type="ChEBI" id="CHEBI:29105"/>
    </ligand>
</feature>
<dbReference type="EC" id="4.2.3.4" evidence="1"/>
<dbReference type="EMBL" id="AJ248284">
    <property type="protein sequence ID" value="CAB49370.1"/>
    <property type="status" value="ALT_INIT"/>
    <property type="molecule type" value="Genomic_DNA"/>
</dbReference>
<dbReference type="EMBL" id="HE613800">
    <property type="protein sequence ID" value="CCE69831.1"/>
    <property type="molecule type" value="Genomic_DNA"/>
</dbReference>
<dbReference type="PIR" id="C75161">
    <property type="entry name" value="C75161"/>
</dbReference>
<dbReference type="RefSeq" id="WP_048147236.1">
    <property type="nucleotide sequence ID" value="NC_000868.1"/>
</dbReference>
<dbReference type="SMR" id="Q9V1H9"/>
<dbReference type="STRING" id="272844.PAB0298"/>
<dbReference type="KEGG" id="pab:PAB0298"/>
<dbReference type="PATRIC" id="fig|272844.11.peg.475"/>
<dbReference type="eggNOG" id="arCOG00983">
    <property type="taxonomic scope" value="Archaea"/>
</dbReference>
<dbReference type="HOGENOM" id="CLU_001201_0_2_2"/>
<dbReference type="OrthoDB" id="21407at2157"/>
<dbReference type="UniPathway" id="UPA00053">
    <property type="reaction ID" value="UER00085"/>
</dbReference>
<dbReference type="Proteomes" id="UP000000810">
    <property type="component" value="Chromosome"/>
</dbReference>
<dbReference type="Proteomes" id="UP000009139">
    <property type="component" value="Chromosome"/>
</dbReference>
<dbReference type="GO" id="GO:0005737">
    <property type="term" value="C:cytoplasm"/>
    <property type="evidence" value="ECO:0007669"/>
    <property type="project" value="UniProtKB-SubCell"/>
</dbReference>
<dbReference type="GO" id="GO:0003856">
    <property type="term" value="F:3-dehydroquinate synthase activity"/>
    <property type="evidence" value="ECO:0007669"/>
    <property type="project" value="UniProtKB-UniRule"/>
</dbReference>
<dbReference type="GO" id="GO:0046872">
    <property type="term" value="F:metal ion binding"/>
    <property type="evidence" value="ECO:0007669"/>
    <property type="project" value="UniProtKB-KW"/>
</dbReference>
<dbReference type="GO" id="GO:0000166">
    <property type="term" value="F:nucleotide binding"/>
    <property type="evidence" value="ECO:0007669"/>
    <property type="project" value="UniProtKB-KW"/>
</dbReference>
<dbReference type="GO" id="GO:0008652">
    <property type="term" value="P:amino acid biosynthetic process"/>
    <property type="evidence" value="ECO:0007669"/>
    <property type="project" value="UniProtKB-KW"/>
</dbReference>
<dbReference type="GO" id="GO:0009073">
    <property type="term" value="P:aromatic amino acid family biosynthetic process"/>
    <property type="evidence" value="ECO:0007669"/>
    <property type="project" value="UniProtKB-KW"/>
</dbReference>
<dbReference type="GO" id="GO:0009423">
    <property type="term" value="P:chorismate biosynthetic process"/>
    <property type="evidence" value="ECO:0007669"/>
    <property type="project" value="UniProtKB-UniRule"/>
</dbReference>
<dbReference type="CDD" id="cd08195">
    <property type="entry name" value="DHQS"/>
    <property type="match status" value="1"/>
</dbReference>
<dbReference type="FunFam" id="3.40.50.1970:FF:000007">
    <property type="entry name" value="Pentafunctional AROM polypeptide"/>
    <property type="match status" value="1"/>
</dbReference>
<dbReference type="Gene3D" id="3.40.50.1970">
    <property type="match status" value="1"/>
</dbReference>
<dbReference type="Gene3D" id="1.20.1090.10">
    <property type="entry name" value="Dehydroquinate synthase-like - alpha domain"/>
    <property type="match status" value="1"/>
</dbReference>
<dbReference type="HAMAP" id="MF_00110">
    <property type="entry name" value="DHQ_synthase"/>
    <property type="match status" value="1"/>
</dbReference>
<dbReference type="InterPro" id="IPR050071">
    <property type="entry name" value="Dehydroquinate_synthase"/>
</dbReference>
<dbReference type="InterPro" id="IPR016037">
    <property type="entry name" value="DHQ_synth_AroB"/>
</dbReference>
<dbReference type="InterPro" id="IPR030963">
    <property type="entry name" value="DHQ_synth_fam"/>
</dbReference>
<dbReference type="InterPro" id="IPR030960">
    <property type="entry name" value="DHQS/DOIS_N"/>
</dbReference>
<dbReference type="InterPro" id="IPR056179">
    <property type="entry name" value="DHQS_C"/>
</dbReference>
<dbReference type="NCBIfam" id="TIGR01357">
    <property type="entry name" value="aroB"/>
    <property type="match status" value="1"/>
</dbReference>
<dbReference type="PANTHER" id="PTHR43622">
    <property type="entry name" value="3-DEHYDROQUINATE SYNTHASE"/>
    <property type="match status" value="1"/>
</dbReference>
<dbReference type="PANTHER" id="PTHR43622:SF1">
    <property type="entry name" value="3-DEHYDROQUINATE SYNTHASE"/>
    <property type="match status" value="1"/>
</dbReference>
<dbReference type="Pfam" id="PF01761">
    <property type="entry name" value="DHQ_synthase"/>
    <property type="match status" value="1"/>
</dbReference>
<dbReference type="Pfam" id="PF24621">
    <property type="entry name" value="DHQS_C"/>
    <property type="match status" value="1"/>
</dbReference>
<dbReference type="PIRSF" id="PIRSF001455">
    <property type="entry name" value="DHQ_synth"/>
    <property type="match status" value="1"/>
</dbReference>
<dbReference type="SUPFAM" id="SSF56796">
    <property type="entry name" value="Dehydroquinate synthase-like"/>
    <property type="match status" value="1"/>
</dbReference>
<evidence type="ECO:0000255" key="1">
    <source>
        <dbReference type="HAMAP-Rule" id="MF_00110"/>
    </source>
</evidence>
<evidence type="ECO:0000305" key="2"/>
<protein>
    <recommendedName>
        <fullName evidence="1">3-dehydroquinate synthase</fullName>
        <shortName evidence="1">DHQS</shortName>
        <ecNumber evidence="1">4.2.3.4</ecNumber>
    </recommendedName>
</protein>
<keyword id="KW-0028">Amino-acid biosynthesis</keyword>
<keyword id="KW-0057">Aromatic amino acid biosynthesis</keyword>
<keyword id="KW-0170">Cobalt</keyword>
<keyword id="KW-0963">Cytoplasm</keyword>
<keyword id="KW-0456">Lyase</keyword>
<keyword id="KW-0479">Metal-binding</keyword>
<keyword id="KW-0520">NAD</keyword>
<keyword id="KW-0547">Nucleotide-binding</keyword>
<keyword id="KW-0862">Zinc</keyword>
<comment type="function">
    <text evidence="1">Catalyzes the conversion of 3-deoxy-D-arabino-heptulosonate 7-phosphate (DAHP) to dehydroquinate (DHQ).</text>
</comment>
<comment type="catalytic activity">
    <reaction evidence="1">
        <text>7-phospho-2-dehydro-3-deoxy-D-arabino-heptonate = 3-dehydroquinate + phosphate</text>
        <dbReference type="Rhea" id="RHEA:21968"/>
        <dbReference type="ChEBI" id="CHEBI:32364"/>
        <dbReference type="ChEBI" id="CHEBI:43474"/>
        <dbReference type="ChEBI" id="CHEBI:58394"/>
        <dbReference type="EC" id="4.2.3.4"/>
    </reaction>
</comment>
<comment type="cofactor">
    <cofactor evidence="1">
        <name>NAD(+)</name>
        <dbReference type="ChEBI" id="CHEBI:57540"/>
    </cofactor>
</comment>
<comment type="cofactor">
    <cofactor evidence="1">
        <name>Co(2+)</name>
        <dbReference type="ChEBI" id="CHEBI:48828"/>
    </cofactor>
    <cofactor evidence="1">
        <name>Zn(2+)</name>
        <dbReference type="ChEBI" id="CHEBI:29105"/>
    </cofactor>
    <text evidence="1">Binds 1 divalent metal cation per subunit. Can use either Co(2+) or Zn(2+).</text>
</comment>
<comment type="pathway">
    <text evidence="1">Metabolic intermediate biosynthesis; chorismate biosynthesis; chorismate from D-erythrose 4-phosphate and phosphoenolpyruvate: step 2/7.</text>
</comment>
<comment type="subcellular location">
    <subcellularLocation>
        <location evidence="1">Cytoplasm</location>
    </subcellularLocation>
</comment>
<comment type="similarity">
    <text evidence="1">Belongs to the sugar phosphate cyclases superfamily. Dehydroquinate synthase family.</text>
</comment>
<comment type="sequence caution" evidence="2">
    <conflict type="erroneous initiation">
        <sequence resource="EMBL-CDS" id="CAB49370"/>
    </conflict>
    <text>Extended N-terminus.</text>
</comment>
<gene>
    <name evidence="1" type="primary">aroB</name>
    <name type="ordered locus">PYRAB04480</name>
    <name type="ORF">PAB0298</name>
</gene>
<organism>
    <name type="scientific">Pyrococcus abyssi (strain GE5 / Orsay)</name>
    <dbReference type="NCBI Taxonomy" id="272844"/>
    <lineage>
        <taxon>Archaea</taxon>
        <taxon>Methanobacteriati</taxon>
        <taxon>Methanobacteriota</taxon>
        <taxon>Thermococci</taxon>
        <taxon>Thermococcales</taxon>
        <taxon>Thermococcaceae</taxon>
        <taxon>Pyrococcus</taxon>
    </lineage>
</organism>
<name>AROB_PYRAB</name>
<reference key="1">
    <citation type="journal article" date="2003" name="Mol. Microbiol.">
        <title>An integrated analysis of the genome of the hyperthermophilic archaeon Pyrococcus abyssi.</title>
        <authorList>
            <person name="Cohen G.N."/>
            <person name="Barbe V."/>
            <person name="Flament D."/>
            <person name="Galperin M."/>
            <person name="Heilig R."/>
            <person name="Lecompte O."/>
            <person name="Poch O."/>
            <person name="Prieur D."/>
            <person name="Querellou J."/>
            <person name="Ripp R."/>
            <person name="Thierry J.-C."/>
            <person name="Van der Oost J."/>
            <person name="Weissenbach J."/>
            <person name="Zivanovic Y."/>
            <person name="Forterre P."/>
        </authorList>
    </citation>
    <scope>NUCLEOTIDE SEQUENCE [LARGE SCALE GENOMIC DNA]</scope>
    <source>
        <strain>GE5 / Orsay</strain>
    </source>
</reference>
<reference key="2">
    <citation type="journal article" date="2012" name="Curr. Microbiol.">
        <title>Re-annotation of two hyperthermophilic archaea Pyrococcus abyssi GE5 and Pyrococcus furiosus DSM 3638.</title>
        <authorList>
            <person name="Gao J."/>
            <person name="Wang J."/>
        </authorList>
    </citation>
    <scope>GENOME REANNOTATION</scope>
    <source>
        <strain>GE5 / Orsay</strain>
    </source>
</reference>
<accession>Q9V1H9</accession>
<accession>G8ZGF2</accession>
<sequence>MENIIFSPLSSLPSIVEELNPYKIAVLTNDMLKSLWLDKIIELLGGDVFPIVIPDGEEYKTIETAIKIWDELVSFGFTRKSLLIGLGGGVITDIAGFVASTYMRGTLLGFIPTTLLAQVDAAIGGKTGVNFHGKNMIGTFYLPNFVLISTETLSTLPRIELLNGMAEVIKYAILDKNVYRLLQDVKNVEEIRNREDIIRESVNVKVRVVEEDLKESGKRRILNLGHTVGHAIEKLSGYKIKHGFAVSVGLIAAAKLGEKLYNFDSGKVIELVERFNLPTKLPYPPKDIIEAMKLDKKAWYGKIVFVIPVEIGRISIEDVPEELLLQVLGEIR</sequence>
<proteinExistence type="inferred from homology"/>